<name>NNRD_RAT</name>
<reference key="1">
    <citation type="journal article" date="2004" name="Nature">
        <title>Genome sequence of the Brown Norway rat yields insights into mammalian evolution.</title>
        <authorList>
            <person name="Gibbs R.A."/>
            <person name="Weinstock G.M."/>
            <person name="Metzker M.L."/>
            <person name="Muzny D.M."/>
            <person name="Sodergren E.J."/>
            <person name="Scherer S."/>
            <person name="Scott G."/>
            <person name="Steffen D."/>
            <person name="Worley K.C."/>
            <person name="Burch P.E."/>
            <person name="Okwuonu G."/>
            <person name="Hines S."/>
            <person name="Lewis L."/>
            <person name="Deramo C."/>
            <person name="Delgado O."/>
            <person name="Dugan-Rocha S."/>
            <person name="Miner G."/>
            <person name="Morgan M."/>
            <person name="Hawes A."/>
            <person name="Gill R."/>
            <person name="Holt R.A."/>
            <person name="Adams M.D."/>
            <person name="Amanatides P.G."/>
            <person name="Baden-Tillson H."/>
            <person name="Barnstead M."/>
            <person name="Chin S."/>
            <person name="Evans C.A."/>
            <person name="Ferriera S."/>
            <person name="Fosler C."/>
            <person name="Glodek A."/>
            <person name="Gu Z."/>
            <person name="Jennings D."/>
            <person name="Kraft C.L."/>
            <person name="Nguyen T."/>
            <person name="Pfannkoch C.M."/>
            <person name="Sitter C."/>
            <person name="Sutton G.G."/>
            <person name="Venter J.C."/>
            <person name="Woodage T."/>
            <person name="Smith D."/>
            <person name="Lee H.-M."/>
            <person name="Gustafson E."/>
            <person name="Cahill P."/>
            <person name="Kana A."/>
            <person name="Doucette-Stamm L."/>
            <person name="Weinstock K."/>
            <person name="Fechtel K."/>
            <person name="Weiss R.B."/>
            <person name="Dunn D.M."/>
            <person name="Green E.D."/>
            <person name="Blakesley R.W."/>
            <person name="Bouffard G.G."/>
            <person name="De Jong P.J."/>
            <person name="Osoegawa K."/>
            <person name="Zhu B."/>
            <person name="Marra M."/>
            <person name="Schein J."/>
            <person name="Bosdet I."/>
            <person name="Fjell C."/>
            <person name="Jones S."/>
            <person name="Krzywinski M."/>
            <person name="Mathewson C."/>
            <person name="Siddiqui A."/>
            <person name="Wye N."/>
            <person name="McPherson J."/>
            <person name="Zhao S."/>
            <person name="Fraser C.M."/>
            <person name="Shetty J."/>
            <person name="Shatsman S."/>
            <person name="Geer K."/>
            <person name="Chen Y."/>
            <person name="Abramzon S."/>
            <person name="Nierman W.C."/>
            <person name="Havlak P.H."/>
            <person name="Chen R."/>
            <person name="Durbin K.J."/>
            <person name="Egan A."/>
            <person name="Ren Y."/>
            <person name="Song X.-Z."/>
            <person name="Li B."/>
            <person name="Liu Y."/>
            <person name="Qin X."/>
            <person name="Cawley S."/>
            <person name="Cooney A.J."/>
            <person name="D'Souza L.M."/>
            <person name="Martin K."/>
            <person name="Wu J.Q."/>
            <person name="Gonzalez-Garay M.L."/>
            <person name="Jackson A.R."/>
            <person name="Kalafus K.J."/>
            <person name="McLeod M.P."/>
            <person name="Milosavljevic A."/>
            <person name="Virk D."/>
            <person name="Volkov A."/>
            <person name="Wheeler D.A."/>
            <person name="Zhang Z."/>
            <person name="Bailey J.A."/>
            <person name="Eichler E.E."/>
            <person name="Tuzun E."/>
            <person name="Birney E."/>
            <person name="Mongin E."/>
            <person name="Ureta-Vidal A."/>
            <person name="Woodwark C."/>
            <person name="Zdobnov E."/>
            <person name="Bork P."/>
            <person name="Suyama M."/>
            <person name="Torrents D."/>
            <person name="Alexandersson M."/>
            <person name="Trask B.J."/>
            <person name="Young J.M."/>
            <person name="Huang H."/>
            <person name="Wang H."/>
            <person name="Xing H."/>
            <person name="Daniels S."/>
            <person name="Gietzen D."/>
            <person name="Schmidt J."/>
            <person name="Stevens K."/>
            <person name="Vitt U."/>
            <person name="Wingrove J."/>
            <person name="Camara F."/>
            <person name="Mar Alba M."/>
            <person name="Abril J.F."/>
            <person name="Guigo R."/>
            <person name="Smit A."/>
            <person name="Dubchak I."/>
            <person name="Rubin E.M."/>
            <person name="Couronne O."/>
            <person name="Poliakov A."/>
            <person name="Huebner N."/>
            <person name="Ganten D."/>
            <person name="Goesele C."/>
            <person name="Hummel O."/>
            <person name="Kreitler T."/>
            <person name="Lee Y.-A."/>
            <person name="Monti J."/>
            <person name="Schulz H."/>
            <person name="Zimdahl H."/>
            <person name="Himmelbauer H."/>
            <person name="Lehrach H."/>
            <person name="Jacob H.J."/>
            <person name="Bromberg S."/>
            <person name="Gullings-Handley J."/>
            <person name="Jensen-Seaman M.I."/>
            <person name="Kwitek A.E."/>
            <person name="Lazar J."/>
            <person name="Pasko D."/>
            <person name="Tonellato P.J."/>
            <person name="Twigger S."/>
            <person name="Ponting C.P."/>
            <person name="Duarte J.M."/>
            <person name="Rice S."/>
            <person name="Goodstadt L."/>
            <person name="Beatson S.A."/>
            <person name="Emes R.D."/>
            <person name="Winter E.E."/>
            <person name="Webber C."/>
            <person name="Brandt P."/>
            <person name="Nyakatura G."/>
            <person name="Adetobi M."/>
            <person name="Chiaromonte F."/>
            <person name="Elnitski L."/>
            <person name="Eswara P."/>
            <person name="Hardison R.C."/>
            <person name="Hou M."/>
            <person name="Kolbe D."/>
            <person name="Makova K."/>
            <person name="Miller W."/>
            <person name="Nekrutenko A."/>
            <person name="Riemer C."/>
            <person name="Schwartz S."/>
            <person name="Taylor J."/>
            <person name="Yang S."/>
            <person name="Zhang Y."/>
            <person name="Lindpaintner K."/>
            <person name="Andrews T.D."/>
            <person name="Caccamo M."/>
            <person name="Clamp M."/>
            <person name="Clarke L."/>
            <person name="Curwen V."/>
            <person name="Durbin R.M."/>
            <person name="Eyras E."/>
            <person name="Searle S.M."/>
            <person name="Cooper G.M."/>
            <person name="Batzoglou S."/>
            <person name="Brudno M."/>
            <person name="Sidow A."/>
            <person name="Stone E.A."/>
            <person name="Payseur B.A."/>
            <person name="Bourque G."/>
            <person name="Lopez-Otin C."/>
            <person name="Puente X.S."/>
            <person name="Chakrabarti K."/>
            <person name="Chatterji S."/>
            <person name="Dewey C."/>
            <person name="Pachter L."/>
            <person name="Bray N."/>
            <person name="Yap V.B."/>
            <person name="Caspi A."/>
            <person name="Tesler G."/>
            <person name="Pevzner P.A."/>
            <person name="Haussler D."/>
            <person name="Roskin K.M."/>
            <person name="Baertsch R."/>
            <person name="Clawson H."/>
            <person name="Furey T.S."/>
            <person name="Hinrichs A.S."/>
            <person name="Karolchik D."/>
            <person name="Kent W.J."/>
            <person name="Rosenbloom K.R."/>
            <person name="Trumbower H."/>
            <person name="Weirauch M."/>
            <person name="Cooper D.N."/>
            <person name="Stenson P.D."/>
            <person name="Ma B."/>
            <person name="Brent M."/>
            <person name="Arumugam M."/>
            <person name="Shteynberg D."/>
            <person name="Copley R.R."/>
            <person name="Taylor M.S."/>
            <person name="Riethman H."/>
            <person name="Mudunuri U."/>
            <person name="Peterson J."/>
            <person name="Guyer M."/>
            <person name="Felsenfeld A."/>
            <person name="Old S."/>
            <person name="Mockrin S."/>
            <person name="Collins F.S."/>
        </authorList>
    </citation>
    <scope>NUCLEOTIDE SEQUENCE [LARGE SCALE GENOMIC DNA]</scope>
    <source>
        <strain>Brown Norway</strain>
    </source>
</reference>
<accession>D4AAT7</accession>
<protein>
    <recommendedName>
        <fullName evidence="2">ATP-dependent (S)-NAD(P)H-hydrate dehydratase</fullName>
        <ecNumber evidence="1 2">4.2.1.93</ecNumber>
    </recommendedName>
    <alternativeName>
        <fullName evidence="2">ATP-dependent NAD(P)HX dehydratase</fullName>
    </alternativeName>
    <alternativeName>
        <fullName evidence="2">Carbohydrate kinase domain-containing protein</fullName>
    </alternativeName>
    <alternativeName>
        <fullName evidence="3">NAD(P)HX dehydratase</fullName>
    </alternativeName>
</protein>
<proteinExistence type="inferred from homology"/>
<gene>
    <name evidence="3" type="primary">Naxd</name>
    <name type="synonym">Carkd</name>
</gene>
<organism>
    <name type="scientific">Rattus norvegicus</name>
    <name type="common">Rat</name>
    <dbReference type="NCBI Taxonomy" id="10116"/>
    <lineage>
        <taxon>Eukaryota</taxon>
        <taxon>Metazoa</taxon>
        <taxon>Chordata</taxon>
        <taxon>Craniata</taxon>
        <taxon>Vertebrata</taxon>
        <taxon>Euteleostomi</taxon>
        <taxon>Mammalia</taxon>
        <taxon>Eutheria</taxon>
        <taxon>Euarchontoglires</taxon>
        <taxon>Glires</taxon>
        <taxon>Rodentia</taxon>
        <taxon>Myomorpha</taxon>
        <taxon>Muroidea</taxon>
        <taxon>Muridae</taxon>
        <taxon>Murinae</taxon>
        <taxon>Rattus</taxon>
    </lineage>
</organism>
<sequence>MAVCPYGAAAVVMALLSAAIAFHCSPLLAVLQRALSLHTAHATKDMDNLFQLVRNIVPALTSKKHKGQDGRIGIVGGCQEYTGAPYFAGISALKVGADLTHVFCAREAAPVIKSYSPELIVHPVLDSSDAVEEVEKWLPRLHALVVGPGLGRDDLLLNNVRGILESTKARDIPVVIDADGLWLIAQRPALVHGYQKAVLTPNHVEFSRLWDAVLSSPMDTSNHSGSVLKLSQALGNITIVQKGEQDLISNGQQVLVCNQEGSSRRCGGQGDLLSGSLGVMAHWALRAGPEKTNGSSPLLVAAWGACTLTRECNHLAFQKYGRSTTTTDMIAEVGAAFSKLFTT</sequence>
<dbReference type="EC" id="4.2.1.93" evidence="1 2"/>
<dbReference type="SMR" id="D4AAT7"/>
<dbReference type="FunCoup" id="D4AAT7">
    <property type="interactions" value="757"/>
</dbReference>
<dbReference type="STRING" id="10116.ENSRNOP00000060397"/>
<dbReference type="iPTMnet" id="D4AAT7"/>
<dbReference type="PhosphoSitePlus" id="D4AAT7"/>
<dbReference type="SwissPalm" id="D4AAT7"/>
<dbReference type="jPOST" id="D4AAT7"/>
<dbReference type="PaxDb" id="10116-ENSRNOP00000060397"/>
<dbReference type="UCSC" id="RGD:1562691">
    <property type="organism name" value="rat"/>
</dbReference>
<dbReference type="AGR" id="RGD:1562691"/>
<dbReference type="RGD" id="1562691">
    <property type="gene designation" value="Naxd"/>
</dbReference>
<dbReference type="eggNOG" id="KOG3974">
    <property type="taxonomic scope" value="Eukaryota"/>
</dbReference>
<dbReference type="InParanoid" id="D4AAT7"/>
<dbReference type="PhylomeDB" id="D4AAT7"/>
<dbReference type="TreeFam" id="TF300116"/>
<dbReference type="BRENDA" id="4.2.1.93">
    <property type="organism ID" value="5301"/>
</dbReference>
<dbReference type="Reactome" id="R-RNO-197264">
    <property type="pathway name" value="Nicotinamide salvaging"/>
</dbReference>
<dbReference type="PRO" id="PR:D4AAT7"/>
<dbReference type="Proteomes" id="UP000002494">
    <property type="component" value="Unplaced"/>
</dbReference>
<dbReference type="GO" id="GO:0005829">
    <property type="term" value="C:cytosol"/>
    <property type="evidence" value="ECO:0000266"/>
    <property type="project" value="RGD"/>
</dbReference>
<dbReference type="GO" id="GO:0005739">
    <property type="term" value="C:mitochondrion"/>
    <property type="evidence" value="ECO:0007669"/>
    <property type="project" value="UniProtKB-SubCell"/>
</dbReference>
<dbReference type="GO" id="GO:0005524">
    <property type="term" value="F:ATP binding"/>
    <property type="evidence" value="ECO:0007669"/>
    <property type="project" value="UniProtKB-KW"/>
</dbReference>
<dbReference type="GO" id="GO:0047453">
    <property type="term" value="F:ATP-dependent NAD(P)H-hydrate dehydratase activity"/>
    <property type="evidence" value="ECO:0000314"/>
    <property type="project" value="MGI"/>
</dbReference>
<dbReference type="GO" id="GO:0110051">
    <property type="term" value="P:metabolite repair"/>
    <property type="evidence" value="ECO:0000314"/>
    <property type="project" value="FlyBase"/>
</dbReference>
<dbReference type="GO" id="GO:0046496">
    <property type="term" value="P:nicotinamide nucleotide metabolic process"/>
    <property type="evidence" value="ECO:0007669"/>
    <property type="project" value="UniProtKB-UniRule"/>
</dbReference>
<dbReference type="CDD" id="cd01171">
    <property type="entry name" value="YXKO-related"/>
    <property type="match status" value="1"/>
</dbReference>
<dbReference type="FunFam" id="3.40.1190.20:FF:000013">
    <property type="entry name" value="ATP-dependent (S)-NAD(P)H-hydrate dehydratase"/>
    <property type="match status" value="1"/>
</dbReference>
<dbReference type="Gene3D" id="3.40.1190.20">
    <property type="match status" value="1"/>
</dbReference>
<dbReference type="HAMAP" id="MF_01965">
    <property type="entry name" value="NADHX_dehydratase"/>
    <property type="match status" value="1"/>
</dbReference>
<dbReference type="InterPro" id="IPR000631">
    <property type="entry name" value="CARKD"/>
</dbReference>
<dbReference type="InterPro" id="IPR029056">
    <property type="entry name" value="Ribokinase-like"/>
</dbReference>
<dbReference type="NCBIfam" id="TIGR00196">
    <property type="entry name" value="yjeF_cterm"/>
    <property type="match status" value="1"/>
</dbReference>
<dbReference type="PANTHER" id="PTHR12592:SF0">
    <property type="entry name" value="ATP-DEPENDENT (S)-NAD(P)H-HYDRATE DEHYDRATASE"/>
    <property type="match status" value="1"/>
</dbReference>
<dbReference type="PANTHER" id="PTHR12592">
    <property type="entry name" value="ATP-DEPENDENT (S)-NAD(P)H-HYDRATE DEHYDRATASE FAMILY MEMBER"/>
    <property type="match status" value="1"/>
</dbReference>
<dbReference type="Pfam" id="PF01256">
    <property type="entry name" value="Carb_kinase"/>
    <property type="match status" value="1"/>
</dbReference>
<dbReference type="SUPFAM" id="SSF53613">
    <property type="entry name" value="Ribokinase-like"/>
    <property type="match status" value="1"/>
</dbReference>
<dbReference type="PROSITE" id="PS51383">
    <property type="entry name" value="YJEF_C_3"/>
    <property type="match status" value="1"/>
</dbReference>
<comment type="function">
    <text evidence="2">Catalyzes the dehydration of the S-form of NAD(P)HX at the expense of ATP, which is converted to ADP. Together with NAD(P)HX epimerase, which catalyzes the epimerization of the S- and R-forms, the enzyme allows the repair of both epimers of NAD(P)HX, a damaged form of NAD(P)H that is a result of enzymatic or heat-dependent hydration.</text>
</comment>
<comment type="catalytic activity">
    <reaction evidence="1 2">
        <text>(6S)-NADHX + ATP = ADP + phosphate + NADH + H(+)</text>
        <dbReference type="Rhea" id="RHEA:19017"/>
        <dbReference type="ChEBI" id="CHEBI:15378"/>
        <dbReference type="ChEBI" id="CHEBI:30616"/>
        <dbReference type="ChEBI" id="CHEBI:43474"/>
        <dbReference type="ChEBI" id="CHEBI:57945"/>
        <dbReference type="ChEBI" id="CHEBI:64074"/>
        <dbReference type="ChEBI" id="CHEBI:456216"/>
        <dbReference type="EC" id="4.2.1.93"/>
    </reaction>
</comment>
<comment type="catalytic activity">
    <reaction evidence="1">
        <text>(6S)-NADPHX + ATP = ADP + phosphate + NADPH + H(+)</text>
        <dbReference type="Rhea" id="RHEA:32231"/>
        <dbReference type="ChEBI" id="CHEBI:15378"/>
        <dbReference type="ChEBI" id="CHEBI:30616"/>
        <dbReference type="ChEBI" id="CHEBI:43474"/>
        <dbReference type="ChEBI" id="CHEBI:57783"/>
        <dbReference type="ChEBI" id="CHEBI:64076"/>
        <dbReference type="ChEBI" id="CHEBI:456216"/>
        <dbReference type="EC" id="4.2.1.93"/>
    </reaction>
</comment>
<comment type="cofactor">
    <cofactor evidence="2">
        <name>Mg(2+)</name>
        <dbReference type="ChEBI" id="CHEBI:18420"/>
    </cofactor>
</comment>
<comment type="subcellular location">
    <subcellularLocation>
        <location evidence="2">Mitochondrion</location>
    </subcellularLocation>
</comment>
<comment type="similarity">
    <text evidence="2">Belongs to the NnrD/CARKD family.</text>
</comment>
<evidence type="ECO:0000250" key="1">
    <source>
        <dbReference type="UniProtKB" id="Q9CZ42"/>
    </source>
</evidence>
<evidence type="ECO:0000255" key="2">
    <source>
        <dbReference type="HAMAP-Rule" id="MF_03157"/>
    </source>
</evidence>
<evidence type="ECO:0000312" key="3">
    <source>
        <dbReference type="RGD" id="1562691"/>
    </source>
</evidence>
<keyword id="KW-0007">Acetylation</keyword>
<keyword id="KW-0067">ATP-binding</keyword>
<keyword id="KW-0456">Lyase</keyword>
<keyword id="KW-0496">Mitochondrion</keyword>
<keyword id="KW-0520">NAD</keyword>
<keyword id="KW-0521">NADP</keyword>
<keyword id="KW-0547">Nucleotide-binding</keyword>
<keyword id="KW-0597">Phosphoprotein</keyword>
<keyword id="KW-1185">Reference proteome</keyword>
<keyword id="KW-0809">Transit peptide</keyword>
<feature type="transit peptide" description="Mitochondrion" evidence="2">
    <location>
        <begin position="1"/>
        <end position="42"/>
    </location>
</feature>
<feature type="chain" id="PRO_0000416159" description="ATP-dependent (S)-NAD(P)H-hydrate dehydratase">
    <location>
        <begin position="43"/>
        <end position="343"/>
    </location>
</feature>
<feature type="domain" description="YjeF C-terminal" evidence="2">
    <location>
        <begin position="49"/>
        <end position="340"/>
    </location>
</feature>
<feature type="binding site" evidence="2">
    <location>
        <position position="149"/>
    </location>
    <ligand>
        <name>(6S)-NADPHX</name>
        <dbReference type="ChEBI" id="CHEBI:64076"/>
    </ligand>
</feature>
<feature type="binding site" evidence="2">
    <location>
        <begin position="202"/>
        <end position="208"/>
    </location>
    <ligand>
        <name>(6S)-NADPHX</name>
        <dbReference type="ChEBI" id="CHEBI:64076"/>
    </ligand>
</feature>
<feature type="binding site" evidence="2">
    <location>
        <begin position="242"/>
        <end position="246"/>
    </location>
    <ligand>
        <name>ATP</name>
        <dbReference type="ChEBI" id="CHEBI:30616"/>
    </ligand>
</feature>
<feature type="binding site" evidence="2">
    <location>
        <begin position="261"/>
        <end position="270"/>
    </location>
    <ligand>
        <name>ATP</name>
        <dbReference type="ChEBI" id="CHEBI:30616"/>
    </ligand>
</feature>
<feature type="binding site" evidence="2">
    <location>
        <position position="271"/>
    </location>
    <ligand>
        <name>(6S)-NADPHX</name>
        <dbReference type="ChEBI" id="CHEBI:64076"/>
    </ligand>
</feature>
<feature type="modified residue" description="N6-acetyllysine" evidence="1">
    <location>
        <position position="63"/>
    </location>
</feature>
<feature type="modified residue" description="Phosphotyrosine" evidence="1">
    <location>
        <position position="81"/>
    </location>
</feature>